<gene>
    <name type="primary">Rnf217</name>
    <name type="synonym">Ibrdc1</name>
</gene>
<organism>
    <name type="scientific">Mus musculus</name>
    <name type="common">Mouse</name>
    <dbReference type="NCBI Taxonomy" id="10090"/>
    <lineage>
        <taxon>Eukaryota</taxon>
        <taxon>Metazoa</taxon>
        <taxon>Chordata</taxon>
        <taxon>Craniata</taxon>
        <taxon>Vertebrata</taxon>
        <taxon>Euteleostomi</taxon>
        <taxon>Mammalia</taxon>
        <taxon>Eutheria</taxon>
        <taxon>Euarchontoglires</taxon>
        <taxon>Glires</taxon>
        <taxon>Rodentia</taxon>
        <taxon>Myomorpha</taxon>
        <taxon>Muroidea</taxon>
        <taxon>Muridae</taxon>
        <taxon>Murinae</taxon>
        <taxon>Mus</taxon>
        <taxon>Mus</taxon>
    </lineage>
</organism>
<accession>D3YYI7</accession>
<sequence length="515" mass="56036">MGEEQSTVSGSGGARASGGGSAGQPESPRPRGDRVRTAGPRAAASSSRPNGGGGGRDPGCVDASVQEPASNRAPAGQPARLPLSGPLDPQSLELQLEREAEGAGPREAPPGQQPPDGLLLDVLAQRHPPPAKPQVLCSVYCVESDLPEAPSAESPSPSESPPQAPLGPIPASPPPSFPSSPLSLPADPLSPDGGSIELEFYLAPEPFSVPGLLGAPPYSGLGGVGDPYAPLMVLMCRVCLEDKPIKPLPCCKKAVCEECLKIYLSSQVQLGQVEIKCPVTECFEFLEETTVVYNLTHEDSIKYKYFLELGRIDSSTKPCPQCKHFTTFKKKGHIPTPSRSESRYKIQCPTCQLIWCFKCHSPWHEGVNCKEYKKGDKLLRHWASEIEHGQRNAQKCPKCKIHIQRTEGCDHMTCSQCNTNFCYRCGERYRQLRFFGDHTSNLSIFGCKYRYLPERPHLRRLVRGSVCAGKLFIAPLILVLGLALGAIAVVIGLFVFPIYCLCKKQRKRSRTGMHW</sequence>
<comment type="function">
    <text evidence="6">E3 ubiquitin-protein ligase which accepts ubiquitin from E2 ubiquitin-conjugating enzymes in the form of a thioester and then directly transfers the ubiquitin to targeted substrates. Mediates the degradation of the iron exporter ferroportin/SLC40A1 and thus regulates iron homeostasis.</text>
</comment>
<comment type="catalytic activity">
    <reaction evidence="6">
        <text>[E2 ubiquitin-conjugating enzyme]-S-ubiquitinyl-L-cysteine + [acceptor protein]-L-lysine = [E2 ubiquitin-conjugating enzyme]-L-cysteine + [acceptor protein]-N(6)-ubiquitinyl-L-lysine.</text>
        <dbReference type="EC" id="2.3.2.31"/>
    </reaction>
</comment>
<comment type="pathway">
    <text>Protein modification; protein ubiquitination.</text>
</comment>
<comment type="subunit">
    <text evidence="2">Interacts with HAX1.</text>
</comment>
<comment type="subcellular location">
    <subcellularLocation>
        <location evidence="8">Membrane</location>
        <topology evidence="8">Single-pass membrane protein</topology>
    </subcellularLocation>
    <subcellularLocation>
        <location evidence="2">Cytoplasm</location>
    </subcellularLocation>
</comment>
<comment type="domain">
    <text evidence="1">Members of the RBR family are atypical E3 ligases. They interact with the E2 conjugating enzyme UBE2L3 and function like HECT-type E3 enzymes: they bind E2s via the first RING domain, but require an obligate trans-thiolation step during the ubiquitin transfer, requiring a conserved cysteine residue in the second RING domain.</text>
</comment>
<comment type="disruption phenotype">
    <text evidence="6">Macrophage-specific knockout mice have increased iron export and altered ferroportin/SLC40A1 degradation.</text>
</comment>
<comment type="similarity">
    <text evidence="8">Belongs to the RBR family. RNF217 subfamily.</text>
</comment>
<name>RN217_MOUSE</name>
<dbReference type="EC" id="2.3.2.31" evidence="6"/>
<dbReference type="EMBL" id="AC116557">
    <property type="status" value="NOT_ANNOTATED_CDS"/>
    <property type="molecule type" value="Genomic_DNA"/>
</dbReference>
<dbReference type="CCDS" id="CCDS48531.1"/>
<dbReference type="RefSeq" id="NP_001139821.1">
    <property type="nucleotide sequence ID" value="NM_001146349.1"/>
</dbReference>
<dbReference type="FunCoup" id="D3YYI7">
    <property type="interactions" value="86"/>
</dbReference>
<dbReference type="STRING" id="10090.ENSMUSP00000080650"/>
<dbReference type="iPTMnet" id="D3YYI7"/>
<dbReference type="PhosphoSitePlus" id="D3YYI7"/>
<dbReference type="PaxDb" id="10090-ENSMUSP00000080650"/>
<dbReference type="ProteomicsDB" id="300494"/>
<dbReference type="Antibodypedia" id="32675">
    <property type="antibodies" value="121 antibodies from 17 providers"/>
</dbReference>
<dbReference type="Ensembl" id="ENSMUST00000081989.8">
    <property type="protein sequence ID" value="ENSMUSP00000080650.6"/>
    <property type="gene ID" value="ENSMUSG00000063760.10"/>
</dbReference>
<dbReference type="GeneID" id="268291"/>
<dbReference type="KEGG" id="mmu:268291"/>
<dbReference type="UCSC" id="uc007etu.2">
    <property type="organism name" value="mouse"/>
</dbReference>
<dbReference type="AGR" id="MGI:3610311"/>
<dbReference type="CTD" id="154214"/>
<dbReference type="MGI" id="MGI:3610311">
    <property type="gene designation" value="Rnf217"/>
</dbReference>
<dbReference type="VEuPathDB" id="HostDB:ENSMUSG00000063760"/>
<dbReference type="eggNOG" id="KOG1815">
    <property type="taxonomic scope" value="Eukaryota"/>
</dbReference>
<dbReference type="GeneTree" id="ENSGT00730000111285"/>
<dbReference type="HOGENOM" id="CLU_035717_1_0_1"/>
<dbReference type="InParanoid" id="D3YYI7"/>
<dbReference type="OMA" id="GHRENMS"/>
<dbReference type="OrthoDB" id="10009520at2759"/>
<dbReference type="PhylomeDB" id="D3YYI7"/>
<dbReference type="TreeFam" id="TF330860"/>
<dbReference type="Reactome" id="R-MMU-983168">
    <property type="pathway name" value="Antigen processing: Ubiquitination &amp; Proteasome degradation"/>
</dbReference>
<dbReference type="UniPathway" id="UPA00143"/>
<dbReference type="BioGRID-ORCS" id="268291">
    <property type="hits" value="0 hits in 77 CRISPR screens"/>
</dbReference>
<dbReference type="ChiTaRS" id="Rnf217">
    <property type="organism name" value="mouse"/>
</dbReference>
<dbReference type="PRO" id="PR:D3YYI7"/>
<dbReference type="Proteomes" id="UP000000589">
    <property type="component" value="Chromosome 10"/>
</dbReference>
<dbReference type="RNAct" id="D3YYI7">
    <property type="molecule type" value="protein"/>
</dbReference>
<dbReference type="Bgee" id="ENSMUSG00000063760">
    <property type="expression patterns" value="Expressed in endothelial cell of lymphatic vessel and 215 other cell types or tissues"/>
</dbReference>
<dbReference type="GO" id="GO:0005737">
    <property type="term" value="C:cytoplasm"/>
    <property type="evidence" value="ECO:0007669"/>
    <property type="project" value="UniProtKB-SubCell"/>
</dbReference>
<dbReference type="GO" id="GO:0016020">
    <property type="term" value="C:membrane"/>
    <property type="evidence" value="ECO:0007669"/>
    <property type="project" value="UniProtKB-SubCell"/>
</dbReference>
<dbReference type="GO" id="GO:0004842">
    <property type="term" value="F:ubiquitin-protein transferase activity"/>
    <property type="evidence" value="ECO:0007669"/>
    <property type="project" value="InterPro"/>
</dbReference>
<dbReference type="GO" id="GO:0008270">
    <property type="term" value="F:zinc ion binding"/>
    <property type="evidence" value="ECO:0007669"/>
    <property type="project" value="UniProtKB-KW"/>
</dbReference>
<dbReference type="GO" id="GO:0016567">
    <property type="term" value="P:protein ubiquitination"/>
    <property type="evidence" value="ECO:0007669"/>
    <property type="project" value="UniProtKB-UniPathway"/>
</dbReference>
<dbReference type="CDD" id="cd20342">
    <property type="entry name" value="BRcat_RBR_RNF217"/>
    <property type="match status" value="1"/>
</dbReference>
<dbReference type="CDD" id="cd20350">
    <property type="entry name" value="Rcat_RBR_RNF217"/>
    <property type="match status" value="1"/>
</dbReference>
<dbReference type="CDD" id="cd16622">
    <property type="entry name" value="vRING-HC-C4C4_RBR_RNF217"/>
    <property type="match status" value="1"/>
</dbReference>
<dbReference type="FunFam" id="1.20.120.1750:FF:000008">
    <property type="entry name" value="RBR-type E3 ubiquitin transferase"/>
    <property type="match status" value="1"/>
</dbReference>
<dbReference type="FunFam" id="3.30.40.10:FF:000264">
    <property type="entry name" value="RBR-type E3 ubiquitin transferase"/>
    <property type="match status" value="1"/>
</dbReference>
<dbReference type="Gene3D" id="1.20.120.1750">
    <property type="match status" value="1"/>
</dbReference>
<dbReference type="Gene3D" id="3.30.40.10">
    <property type="entry name" value="Zinc/RING finger domain, C3HC4 (zinc finger)"/>
    <property type="match status" value="1"/>
</dbReference>
<dbReference type="InterPro" id="IPR047551">
    <property type="entry name" value="BRcat_RBR_RNF217"/>
</dbReference>
<dbReference type="InterPro" id="IPR031127">
    <property type="entry name" value="E3_UB_ligase_RBR"/>
</dbReference>
<dbReference type="InterPro" id="IPR002867">
    <property type="entry name" value="IBR_dom"/>
</dbReference>
<dbReference type="InterPro" id="IPR047552">
    <property type="entry name" value="Rcat_RBR_RNF217"/>
</dbReference>
<dbReference type="InterPro" id="IPR047550">
    <property type="entry name" value="RNF217_RBR_vRING-HC"/>
</dbReference>
<dbReference type="InterPro" id="IPR044066">
    <property type="entry name" value="TRIAD_supradom"/>
</dbReference>
<dbReference type="InterPro" id="IPR013083">
    <property type="entry name" value="Znf_RING/FYVE/PHD"/>
</dbReference>
<dbReference type="PANTHER" id="PTHR11685">
    <property type="entry name" value="RBR FAMILY RING FINGER AND IBR DOMAIN-CONTAINING"/>
    <property type="match status" value="1"/>
</dbReference>
<dbReference type="Pfam" id="PF01485">
    <property type="entry name" value="IBR"/>
    <property type="match status" value="1"/>
</dbReference>
<dbReference type="Pfam" id="PF22191">
    <property type="entry name" value="IBR_1"/>
    <property type="match status" value="1"/>
</dbReference>
<dbReference type="SMART" id="SM00647">
    <property type="entry name" value="IBR"/>
    <property type="match status" value="2"/>
</dbReference>
<dbReference type="SUPFAM" id="SSF57850">
    <property type="entry name" value="RING/U-box"/>
    <property type="match status" value="3"/>
</dbReference>
<dbReference type="PROSITE" id="PS51873">
    <property type="entry name" value="TRIAD"/>
    <property type="match status" value="1"/>
</dbReference>
<feature type="chain" id="PRO_0000415821" description="E3 ubiquitin-protein ligase RNF217">
    <location>
        <begin position="1"/>
        <end position="515"/>
    </location>
</feature>
<feature type="transmembrane region" description="Helical" evidence="3">
    <location>
        <begin position="476"/>
        <end position="496"/>
    </location>
</feature>
<feature type="zinc finger region" description="RING-type 1" evidence="4">
    <location>
        <begin position="236"/>
        <end position="282"/>
    </location>
</feature>
<feature type="zinc finger region" description="IBR-type" evidence="4">
    <location>
        <begin position="301"/>
        <end position="369"/>
    </location>
</feature>
<feature type="zinc finger region" description="RING-type 2; atypical" evidence="4">
    <location>
        <begin position="396"/>
        <end position="425"/>
    </location>
</feature>
<feature type="region of interest" description="Disordered" evidence="5">
    <location>
        <begin position="1"/>
        <end position="125"/>
    </location>
</feature>
<feature type="region of interest" description="Disordered" evidence="5">
    <location>
        <begin position="147"/>
        <end position="189"/>
    </location>
</feature>
<feature type="region of interest" description="TRIAD supradomain" evidence="4">
    <location>
        <begin position="232"/>
        <end position="451"/>
    </location>
</feature>
<feature type="compositionally biased region" description="Gly residues" evidence="5">
    <location>
        <begin position="10"/>
        <end position="22"/>
    </location>
</feature>
<feature type="compositionally biased region" description="Low complexity" evidence="5">
    <location>
        <begin position="39"/>
        <end position="49"/>
    </location>
</feature>
<feature type="compositionally biased region" description="Low complexity" evidence="5">
    <location>
        <begin position="147"/>
        <end position="157"/>
    </location>
</feature>
<feature type="compositionally biased region" description="Pro residues" evidence="5">
    <location>
        <begin position="158"/>
        <end position="178"/>
    </location>
</feature>
<feature type="compositionally biased region" description="Low complexity" evidence="5">
    <location>
        <begin position="179"/>
        <end position="189"/>
    </location>
</feature>
<feature type="active site" evidence="4">
    <location>
        <position position="409"/>
    </location>
</feature>
<feature type="binding site" evidence="4">
    <location>
        <position position="236"/>
    </location>
    <ligand>
        <name>Zn(2+)</name>
        <dbReference type="ChEBI" id="CHEBI:29105"/>
        <label>1</label>
    </ligand>
</feature>
<feature type="binding site" evidence="4">
    <location>
        <position position="239"/>
    </location>
    <ligand>
        <name>Zn(2+)</name>
        <dbReference type="ChEBI" id="CHEBI:29105"/>
        <label>1</label>
    </ligand>
</feature>
<feature type="binding site" evidence="4">
    <location>
        <position position="256"/>
    </location>
    <ligand>
        <name>Zn(2+)</name>
        <dbReference type="ChEBI" id="CHEBI:29105"/>
        <label>1</label>
    </ligand>
</feature>
<feature type="binding site" evidence="4">
    <location>
        <position position="259"/>
    </location>
    <ligand>
        <name>Zn(2+)</name>
        <dbReference type="ChEBI" id="CHEBI:29105"/>
        <label>1</label>
    </ligand>
</feature>
<feature type="binding site" evidence="4">
    <location>
        <position position="356"/>
    </location>
    <ligand>
        <name>Zn(2+)</name>
        <dbReference type="ChEBI" id="CHEBI:29105"/>
        <label>2</label>
    </ligand>
</feature>
<feature type="binding site" evidence="4">
    <location>
        <position position="359"/>
    </location>
    <ligand>
        <name>Zn(2+)</name>
        <dbReference type="ChEBI" id="CHEBI:29105"/>
        <label>2</label>
    </ligand>
</feature>
<feature type="binding site" evidence="4">
    <location>
        <position position="364"/>
    </location>
    <ligand>
        <name>Zn(2+)</name>
        <dbReference type="ChEBI" id="CHEBI:29105"/>
        <label>2</label>
    </ligand>
</feature>
<feature type="binding site" evidence="4">
    <location>
        <position position="369"/>
    </location>
    <ligand>
        <name>Zn(2+)</name>
        <dbReference type="ChEBI" id="CHEBI:29105"/>
        <label>2</label>
    </ligand>
</feature>
<feature type="binding site" evidence="4">
    <location>
        <position position="396"/>
    </location>
    <ligand>
        <name>Zn(2+)</name>
        <dbReference type="ChEBI" id="CHEBI:29105"/>
        <label>3</label>
    </ligand>
</feature>
<feature type="binding site" evidence="4">
    <location>
        <position position="399"/>
    </location>
    <ligand>
        <name>Zn(2+)</name>
        <dbReference type="ChEBI" id="CHEBI:29105"/>
        <label>3</label>
    </ligand>
</feature>
<feature type="binding site" evidence="4">
    <location>
        <position position="414"/>
    </location>
    <ligand>
        <name>Zn(2+)</name>
        <dbReference type="ChEBI" id="CHEBI:29105"/>
        <label>3</label>
    </ligand>
</feature>
<feature type="binding site" evidence="4">
    <location>
        <position position="417"/>
    </location>
    <ligand>
        <name>Zn(2+)</name>
        <dbReference type="ChEBI" id="CHEBI:29105"/>
        <label>3</label>
    </ligand>
</feature>
<feature type="binding site" evidence="4">
    <location>
        <position position="422"/>
    </location>
    <ligand>
        <name>Zn(2+)</name>
        <dbReference type="ChEBI" id="CHEBI:29105"/>
        <label>4</label>
    </ligand>
</feature>
<feature type="binding site" evidence="4">
    <location>
        <position position="425"/>
    </location>
    <ligand>
        <name>Zn(2+)</name>
        <dbReference type="ChEBI" id="CHEBI:29105"/>
        <label>4</label>
    </ligand>
</feature>
<feature type="binding site" evidence="4">
    <location>
        <position position="438"/>
    </location>
    <ligand>
        <name>Zn(2+)</name>
        <dbReference type="ChEBI" id="CHEBI:29105"/>
        <label>4</label>
    </ligand>
</feature>
<feature type="binding site" evidence="4">
    <location>
        <position position="447"/>
    </location>
    <ligand>
        <name>Zn(2+)</name>
        <dbReference type="ChEBI" id="CHEBI:29105"/>
        <label>4</label>
    </ligand>
</feature>
<feature type="mutagenesis site" description="Loss of SLC40A1 degradation; when associated with A-239." evidence="6">
    <original>C</original>
    <variation>A</variation>
    <location>
        <position position="236"/>
    </location>
</feature>
<feature type="mutagenesis site" description="Loss of SLC40A1 degradation; when associated with A-236." evidence="6">
    <original>C</original>
    <variation>A</variation>
    <location>
        <position position="239"/>
    </location>
</feature>
<feature type="mutagenesis site" description="Loss of SLC40A1 degradation." evidence="6">
    <original>C</original>
    <variation>A</variation>
    <location>
        <position position="409"/>
    </location>
</feature>
<evidence type="ECO:0000250" key="1">
    <source>
        <dbReference type="UniProtKB" id="O60260"/>
    </source>
</evidence>
<evidence type="ECO:0000250" key="2">
    <source>
        <dbReference type="UniProtKB" id="Q8TC41"/>
    </source>
</evidence>
<evidence type="ECO:0000255" key="3"/>
<evidence type="ECO:0000255" key="4">
    <source>
        <dbReference type="PROSITE-ProRule" id="PRU01221"/>
    </source>
</evidence>
<evidence type="ECO:0000256" key="5">
    <source>
        <dbReference type="SAM" id="MobiDB-lite"/>
    </source>
</evidence>
<evidence type="ECO:0000269" key="6">
    <source>
    </source>
</evidence>
<evidence type="ECO:0000303" key="7">
    <source>
    </source>
</evidence>
<evidence type="ECO:0000305" key="8"/>
<keyword id="KW-0963">Cytoplasm</keyword>
<keyword id="KW-0472">Membrane</keyword>
<keyword id="KW-0479">Metal-binding</keyword>
<keyword id="KW-1185">Reference proteome</keyword>
<keyword id="KW-0677">Repeat</keyword>
<keyword id="KW-0808">Transferase</keyword>
<keyword id="KW-0812">Transmembrane</keyword>
<keyword id="KW-1133">Transmembrane helix</keyword>
<keyword id="KW-0833">Ubl conjugation pathway</keyword>
<keyword id="KW-0862">Zinc</keyword>
<keyword id="KW-0863">Zinc-finger</keyword>
<reference key="1">
    <citation type="journal article" date="2009" name="PLoS Biol.">
        <title>Lineage-specific biology revealed by a finished genome assembly of the mouse.</title>
        <authorList>
            <person name="Church D.M."/>
            <person name="Goodstadt L."/>
            <person name="Hillier L.W."/>
            <person name="Zody M.C."/>
            <person name="Goldstein S."/>
            <person name="She X."/>
            <person name="Bult C.J."/>
            <person name="Agarwala R."/>
            <person name="Cherry J.L."/>
            <person name="DiCuccio M."/>
            <person name="Hlavina W."/>
            <person name="Kapustin Y."/>
            <person name="Meric P."/>
            <person name="Maglott D."/>
            <person name="Birtle Z."/>
            <person name="Marques A.C."/>
            <person name="Graves T."/>
            <person name="Zhou S."/>
            <person name="Teague B."/>
            <person name="Potamousis K."/>
            <person name="Churas C."/>
            <person name="Place M."/>
            <person name="Herschleb J."/>
            <person name="Runnheim R."/>
            <person name="Forrest D."/>
            <person name="Amos-Landgraf J."/>
            <person name="Schwartz D.C."/>
            <person name="Cheng Z."/>
            <person name="Lindblad-Toh K."/>
            <person name="Eichler E.E."/>
            <person name="Ponting C.P."/>
        </authorList>
    </citation>
    <scope>NUCLEOTIDE SEQUENCE [LARGE SCALE GENOMIC DNA]</scope>
    <source>
        <strain>C57BL/6J</strain>
    </source>
</reference>
<reference key="2">
    <citation type="journal article" date="2021" name="Blood">
        <title>RNF217 regulates iron homeostasis through its E3 ubiquitin ligase activity by modulating ferroportin degradation.</title>
        <authorList>
            <person name="Jiang L."/>
            <person name="Wang J."/>
            <person name="Wang K."/>
            <person name="Wang H."/>
            <person name="Wu Q."/>
            <person name="Yang C."/>
            <person name="Yu Y."/>
            <person name="Ni P."/>
            <person name="Zhong Y."/>
            <person name="Song Z."/>
            <person name="Xie E."/>
            <person name="Hu R."/>
            <person name="Min J."/>
            <person name="Wang F."/>
        </authorList>
    </citation>
    <scope>FUNCTION</scope>
    <scope>CATALYTIC ACTIVITY</scope>
    <scope>DISRUPTION PHENOTYPE</scope>
    <scope>MUTAGENESIS OF CYS-236; CYS-239 AND CYS-409</scope>
</reference>
<protein>
    <recommendedName>
        <fullName evidence="7">E3 ubiquitin-protein ligase RNF217</fullName>
        <ecNumber evidence="6">2.3.2.31</ecNumber>
    </recommendedName>
    <alternativeName>
        <fullName>IBR domain-containing protein 1</fullName>
    </alternativeName>
    <alternativeName>
        <fullName>RING finger protein 217</fullName>
    </alternativeName>
</protein>
<proteinExistence type="evidence at protein level"/>